<sequence length="331" mass="36780">MKVYAAPFEKFVNLADARLGTKILSVTDDWFADANRLFQPTPAVWKEGVFDDNGKWMDGWESRRKRFEGYDSAVIRLGVAGTIKGVDIDTSFFTGNFPPSASLEACFLASGEPDENTAWTEVLPSVELQGNSHHYHEITNDQAFSHLRFNIYPDGGVARLRVYGVPHRDWSKVSEDEQIDLVAALNGGRSIACSDEHYGSMSNILNPGRGVNMGDGWETARRRTPGNDWVIVALGHKGEVEKVIVDTLHFKGNYPDSCSIQGAFVKGGTDSQIETQSLFWRELLPSQKLTMHAEHEFAEQINAIGPITHIRLNVFPDGGVSRLRVLGKVSR</sequence>
<evidence type="ECO:0000255" key="1">
    <source>
        <dbReference type="HAMAP-Rule" id="MF_00813"/>
    </source>
</evidence>
<protein>
    <recommendedName>
        <fullName evidence="1">Probable allantoicase</fullName>
        <ecNumber evidence="1">3.5.3.4</ecNumber>
    </recommendedName>
    <alternativeName>
        <fullName evidence="1">Allantoate amidinohydrolase</fullName>
    </alternativeName>
</protein>
<accession>Q48KS4</accession>
<keyword id="KW-0378">Hydrolase</keyword>
<keyword id="KW-0659">Purine metabolism</keyword>
<name>ALLC_PSE14</name>
<gene>
    <name evidence="1" type="primary">alc</name>
    <name type="ordered locus">PSPPH_1767</name>
</gene>
<proteinExistence type="inferred from homology"/>
<organism>
    <name type="scientific">Pseudomonas savastanoi pv. phaseolicola (strain 1448A / Race 6)</name>
    <name type="common">Pseudomonas syringae pv. phaseolicola (strain 1448A / Race 6)</name>
    <dbReference type="NCBI Taxonomy" id="264730"/>
    <lineage>
        <taxon>Bacteria</taxon>
        <taxon>Pseudomonadati</taxon>
        <taxon>Pseudomonadota</taxon>
        <taxon>Gammaproteobacteria</taxon>
        <taxon>Pseudomonadales</taxon>
        <taxon>Pseudomonadaceae</taxon>
        <taxon>Pseudomonas</taxon>
    </lineage>
</organism>
<comment type="catalytic activity">
    <reaction evidence="1">
        <text>allantoate + H2O = (S)-ureidoglycolate + urea</text>
        <dbReference type="Rhea" id="RHEA:11016"/>
        <dbReference type="ChEBI" id="CHEBI:15377"/>
        <dbReference type="ChEBI" id="CHEBI:16199"/>
        <dbReference type="ChEBI" id="CHEBI:17536"/>
        <dbReference type="ChEBI" id="CHEBI:57296"/>
        <dbReference type="EC" id="3.5.3.4"/>
    </reaction>
</comment>
<comment type="pathway">
    <text evidence="1">Nitrogen metabolism; (S)-allantoin degradation; (S)-ureidoglycolate from allantoate (aminidohydrolase route): step 1/1.</text>
</comment>
<comment type="similarity">
    <text evidence="1">Belongs to the allantoicase family.</text>
</comment>
<reference key="1">
    <citation type="journal article" date="2005" name="J. Bacteriol.">
        <title>Whole-genome sequence analysis of Pseudomonas syringae pv. phaseolicola 1448A reveals divergence among pathovars in genes involved in virulence and transposition.</title>
        <authorList>
            <person name="Joardar V."/>
            <person name="Lindeberg M."/>
            <person name="Jackson R.W."/>
            <person name="Selengut J."/>
            <person name="Dodson R."/>
            <person name="Brinkac L.M."/>
            <person name="Daugherty S.C."/>
            <person name="DeBoy R.T."/>
            <person name="Durkin A.S."/>
            <person name="Gwinn Giglio M."/>
            <person name="Madupu R."/>
            <person name="Nelson W.C."/>
            <person name="Rosovitz M.J."/>
            <person name="Sullivan S.A."/>
            <person name="Crabtree J."/>
            <person name="Creasy T."/>
            <person name="Davidsen T.M."/>
            <person name="Haft D.H."/>
            <person name="Zafar N."/>
            <person name="Zhou L."/>
            <person name="Halpin R."/>
            <person name="Holley T."/>
            <person name="Khouri H.M."/>
            <person name="Feldblyum T.V."/>
            <person name="White O."/>
            <person name="Fraser C.M."/>
            <person name="Chatterjee A.K."/>
            <person name="Cartinhour S."/>
            <person name="Schneider D."/>
            <person name="Mansfield J.W."/>
            <person name="Collmer A."/>
            <person name="Buell R."/>
        </authorList>
    </citation>
    <scope>NUCLEOTIDE SEQUENCE [LARGE SCALE GENOMIC DNA]</scope>
    <source>
        <strain>1448A / Race 6</strain>
    </source>
</reference>
<feature type="chain" id="PRO_1000062282" description="Probable allantoicase">
    <location>
        <begin position="1"/>
        <end position="331"/>
    </location>
</feature>
<dbReference type="EC" id="3.5.3.4" evidence="1"/>
<dbReference type="EMBL" id="CP000058">
    <property type="protein sequence ID" value="AAZ34438.1"/>
    <property type="molecule type" value="Genomic_DNA"/>
</dbReference>
<dbReference type="RefSeq" id="WP_004665859.1">
    <property type="nucleotide sequence ID" value="NC_005773.3"/>
</dbReference>
<dbReference type="SMR" id="Q48KS4"/>
<dbReference type="KEGG" id="psp:PSPPH_1767"/>
<dbReference type="eggNOG" id="COG4266">
    <property type="taxonomic scope" value="Bacteria"/>
</dbReference>
<dbReference type="HOGENOM" id="CLU_038797_1_2_6"/>
<dbReference type="UniPathway" id="UPA00395">
    <property type="reaction ID" value="UER00654"/>
</dbReference>
<dbReference type="Proteomes" id="UP000000551">
    <property type="component" value="Chromosome"/>
</dbReference>
<dbReference type="GO" id="GO:0004037">
    <property type="term" value="F:allantoicase activity"/>
    <property type="evidence" value="ECO:0007669"/>
    <property type="project" value="UniProtKB-UniRule"/>
</dbReference>
<dbReference type="GO" id="GO:0000256">
    <property type="term" value="P:allantoin catabolic process"/>
    <property type="evidence" value="ECO:0007669"/>
    <property type="project" value="UniProtKB-UniRule"/>
</dbReference>
<dbReference type="GO" id="GO:0006144">
    <property type="term" value="P:purine nucleobase metabolic process"/>
    <property type="evidence" value="ECO:0007669"/>
    <property type="project" value="UniProtKB-KW"/>
</dbReference>
<dbReference type="FunFam" id="2.60.120.260:FF:000059">
    <property type="entry name" value="Probable allantoicase"/>
    <property type="match status" value="1"/>
</dbReference>
<dbReference type="FunFam" id="2.60.120.260:FF:000090">
    <property type="entry name" value="Probable allantoicase"/>
    <property type="match status" value="1"/>
</dbReference>
<dbReference type="Gene3D" id="2.60.120.260">
    <property type="entry name" value="Galactose-binding domain-like"/>
    <property type="match status" value="2"/>
</dbReference>
<dbReference type="HAMAP" id="MF_00813">
    <property type="entry name" value="Allantoicase"/>
    <property type="match status" value="1"/>
</dbReference>
<dbReference type="InterPro" id="IPR005164">
    <property type="entry name" value="Allantoicase"/>
</dbReference>
<dbReference type="InterPro" id="IPR015908">
    <property type="entry name" value="Allantoicase_dom"/>
</dbReference>
<dbReference type="InterPro" id="IPR008979">
    <property type="entry name" value="Galactose-bd-like_sf"/>
</dbReference>
<dbReference type="NCBIfam" id="TIGR02961">
    <property type="entry name" value="allantoicase"/>
    <property type="match status" value="1"/>
</dbReference>
<dbReference type="PANTHER" id="PTHR12045">
    <property type="entry name" value="ALLANTOICASE"/>
    <property type="match status" value="1"/>
</dbReference>
<dbReference type="PANTHER" id="PTHR12045:SF3">
    <property type="entry name" value="INACTIVE ALLANTOICASE-RELATED"/>
    <property type="match status" value="1"/>
</dbReference>
<dbReference type="Pfam" id="PF03561">
    <property type="entry name" value="Allantoicase"/>
    <property type="match status" value="2"/>
</dbReference>
<dbReference type="PIRSF" id="PIRSF016516">
    <property type="entry name" value="Allantoicase"/>
    <property type="match status" value="1"/>
</dbReference>
<dbReference type="SUPFAM" id="SSF49785">
    <property type="entry name" value="Galactose-binding domain-like"/>
    <property type="match status" value="2"/>
</dbReference>